<evidence type="ECO:0000255" key="1">
    <source>
        <dbReference type="HAMAP-Rule" id="MF_00110"/>
    </source>
</evidence>
<proteinExistence type="inferred from homology"/>
<sequence length="363" mass="40293">MGNIHIQTKSKEYDVYVGKESLSHLTTIVQNMQPSVSNIMIISDEAVASLHLQTVVDALQIDQKVFSFVVPSGEKEKSFENFYAAHTSALENKLDRNSLIIALGGGMIGDLAGFVAASFMRGIRFVQVPTTLLAHDSAVGGKVAINHPLGKNMIGAFHQPEAVVYHTPFLQSLPEKEWRSGYAEVIKHALIGDVKLYHWLKEEVQTLADLRDEKLIHILMKAIPVKANIVAQDETEKGVRAHLNFGHTLGHALEKELGYGNITHGDGVAVGMLFAIFLSEQVYKVNLAYEEMKQWFLNYGYPKMPSDLSVERLVGLMKQDKKANAGTIHMVLMQEYGVVNVVSIPDETVHIALEAFQKDMVEK</sequence>
<dbReference type="EC" id="4.2.3.4" evidence="1"/>
<dbReference type="EMBL" id="CP001598">
    <property type="protein sequence ID" value="ACQ46336.1"/>
    <property type="molecule type" value="Genomic_DNA"/>
</dbReference>
<dbReference type="RefSeq" id="WP_000526831.1">
    <property type="nucleotide sequence ID" value="NC_012659.1"/>
</dbReference>
<dbReference type="SMR" id="C3P5A4"/>
<dbReference type="GeneID" id="45021512"/>
<dbReference type="KEGG" id="bai:BAA_1607"/>
<dbReference type="HOGENOM" id="CLU_001201_0_2_9"/>
<dbReference type="UniPathway" id="UPA00053">
    <property type="reaction ID" value="UER00085"/>
</dbReference>
<dbReference type="GO" id="GO:0005737">
    <property type="term" value="C:cytoplasm"/>
    <property type="evidence" value="ECO:0007669"/>
    <property type="project" value="UniProtKB-SubCell"/>
</dbReference>
<dbReference type="GO" id="GO:0003856">
    <property type="term" value="F:3-dehydroquinate synthase activity"/>
    <property type="evidence" value="ECO:0007669"/>
    <property type="project" value="UniProtKB-UniRule"/>
</dbReference>
<dbReference type="GO" id="GO:0046872">
    <property type="term" value="F:metal ion binding"/>
    <property type="evidence" value="ECO:0007669"/>
    <property type="project" value="UniProtKB-KW"/>
</dbReference>
<dbReference type="GO" id="GO:0000166">
    <property type="term" value="F:nucleotide binding"/>
    <property type="evidence" value="ECO:0007669"/>
    <property type="project" value="UniProtKB-KW"/>
</dbReference>
<dbReference type="GO" id="GO:0008652">
    <property type="term" value="P:amino acid biosynthetic process"/>
    <property type="evidence" value="ECO:0007669"/>
    <property type="project" value="UniProtKB-KW"/>
</dbReference>
<dbReference type="GO" id="GO:0009073">
    <property type="term" value="P:aromatic amino acid family biosynthetic process"/>
    <property type="evidence" value="ECO:0007669"/>
    <property type="project" value="UniProtKB-KW"/>
</dbReference>
<dbReference type="GO" id="GO:0009423">
    <property type="term" value="P:chorismate biosynthetic process"/>
    <property type="evidence" value="ECO:0007669"/>
    <property type="project" value="UniProtKB-UniRule"/>
</dbReference>
<dbReference type="CDD" id="cd08195">
    <property type="entry name" value="DHQS"/>
    <property type="match status" value="1"/>
</dbReference>
<dbReference type="FunFam" id="1.20.1090.10:FF:000008">
    <property type="entry name" value="3-dehydroquinate synthase"/>
    <property type="match status" value="1"/>
</dbReference>
<dbReference type="FunFam" id="3.40.50.1970:FF:000001">
    <property type="entry name" value="3-dehydroquinate synthase"/>
    <property type="match status" value="1"/>
</dbReference>
<dbReference type="Gene3D" id="3.40.50.1970">
    <property type="match status" value="1"/>
</dbReference>
<dbReference type="Gene3D" id="1.20.1090.10">
    <property type="entry name" value="Dehydroquinate synthase-like - alpha domain"/>
    <property type="match status" value="1"/>
</dbReference>
<dbReference type="HAMAP" id="MF_00110">
    <property type="entry name" value="DHQ_synthase"/>
    <property type="match status" value="1"/>
</dbReference>
<dbReference type="InterPro" id="IPR050071">
    <property type="entry name" value="Dehydroquinate_synthase"/>
</dbReference>
<dbReference type="InterPro" id="IPR016037">
    <property type="entry name" value="DHQ_synth_AroB"/>
</dbReference>
<dbReference type="InterPro" id="IPR030963">
    <property type="entry name" value="DHQ_synth_fam"/>
</dbReference>
<dbReference type="InterPro" id="IPR030960">
    <property type="entry name" value="DHQS/DOIS_N"/>
</dbReference>
<dbReference type="InterPro" id="IPR056179">
    <property type="entry name" value="DHQS_C"/>
</dbReference>
<dbReference type="NCBIfam" id="TIGR01357">
    <property type="entry name" value="aroB"/>
    <property type="match status" value="1"/>
</dbReference>
<dbReference type="PANTHER" id="PTHR43622">
    <property type="entry name" value="3-DEHYDROQUINATE SYNTHASE"/>
    <property type="match status" value="1"/>
</dbReference>
<dbReference type="PANTHER" id="PTHR43622:SF7">
    <property type="entry name" value="3-DEHYDROQUINATE SYNTHASE, CHLOROPLASTIC"/>
    <property type="match status" value="1"/>
</dbReference>
<dbReference type="Pfam" id="PF01761">
    <property type="entry name" value="DHQ_synthase"/>
    <property type="match status" value="1"/>
</dbReference>
<dbReference type="Pfam" id="PF24621">
    <property type="entry name" value="DHQS_C"/>
    <property type="match status" value="1"/>
</dbReference>
<dbReference type="PIRSF" id="PIRSF001455">
    <property type="entry name" value="DHQ_synth"/>
    <property type="match status" value="1"/>
</dbReference>
<dbReference type="SUPFAM" id="SSF56796">
    <property type="entry name" value="Dehydroquinate synthase-like"/>
    <property type="match status" value="1"/>
</dbReference>
<keyword id="KW-0028">Amino-acid biosynthesis</keyword>
<keyword id="KW-0057">Aromatic amino acid biosynthesis</keyword>
<keyword id="KW-0170">Cobalt</keyword>
<keyword id="KW-0963">Cytoplasm</keyword>
<keyword id="KW-0456">Lyase</keyword>
<keyword id="KW-0479">Metal-binding</keyword>
<keyword id="KW-0520">NAD</keyword>
<keyword id="KW-0547">Nucleotide-binding</keyword>
<keyword id="KW-0862">Zinc</keyword>
<gene>
    <name evidence="1" type="primary">aroB</name>
    <name type="ordered locus">BAA_1607</name>
</gene>
<organism>
    <name type="scientific">Bacillus anthracis (strain A0248)</name>
    <dbReference type="NCBI Taxonomy" id="592021"/>
    <lineage>
        <taxon>Bacteria</taxon>
        <taxon>Bacillati</taxon>
        <taxon>Bacillota</taxon>
        <taxon>Bacilli</taxon>
        <taxon>Bacillales</taxon>
        <taxon>Bacillaceae</taxon>
        <taxon>Bacillus</taxon>
        <taxon>Bacillus cereus group</taxon>
    </lineage>
</organism>
<name>AROB_BACAA</name>
<protein>
    <recommendedName>
        <fullName evidence="1">3-dehydroquinate synthase</fullName>
        <shortName evidence="1">DHQS</shortName>
        <ecNumber evidence="1">4.2.3.4</ecNumber>
    </recommendedName>
</protein>
<feature type="chain" id="PRO_1000119071" description="3-dehydroquinate synthase">
    <location>
        <begin position="1"/>
        <end position="363"/>
    </location>
</feature>
<feature type="binding site" evidence="1">
    <location>
        <begin position="72"/>
        <end position="77"/>
    </location>
    <ligand>
        <name>NAD(+)</name>
        <dbReference type="ChEBI" id="CHEBI:57540"/>
    </ligand>
</feature>
<feature type="binding site" evidence="1">
    <location>
        <begin position="130"/>
        <end position="131"/>
    </location>
    <ligand>
        <name>NAD(+)</name>
        <dbReference type="ChEBI" id="CHEBI:57540"/>
    </ligand>
</feature>
<feature type="binding site" evidence="1">
    <location>
        <position position="142"/>
    </location>
    <ligand>
        <name>NAD(+)</name>
        <dbReference type="ChEBI" id="CHEBI:57540"/>
    </ligand>
</feature>
<feature type="binding site" evidence="1">
    <location>
        <position position="151"/>
    </location>
    <ligand>
        <name>NAD(+)</name>
        <dbReference type="ChEBI" id="CHEBI:57540"/>
    </ligand>
</feature>
<feature type="binding site" evidence="1">
    <location>
        <position position="184"/>
    </location>
    <ligand>
        <name>Zn(2+)</name>
        <dbReference type="ChEBI" id="CHEBI:29105"/>
    </ligand>
</feature>
<feature type="binding site" evidence="1">
    <location>
        <position position="247"/>
    </location>
    <ligand>
        <name>Zn(2+)</name>
        <dbReference type="ChEBI" id="CHEBI:29105"/>
    </ligand>
</feature>
<feature type="binding site" evidence="1">
    <location>
        <position position="264"/>
    </location>
    <ligand>
        <name>Zn(2+)</name>
        <dbReference type="ChEBI" id="CHEBI:29105"/>
    </ligand>
</feature>
<reference key="1">
    <citation type="submission" date="2009-04" db="EMBL/GenBank/DDBJ databases">
        <title>Genome sequence of Bacillus anthracis A0248.</title>
        <authorList>
            <person name="Dodson R.J."/>
            <person name="Munk A.C."/>
            <person name="Bruce D."/>
            <person name="Detter C."/>
            <person name="Tapia R."/>
            <person name="Sutton G."/>
            <person name="Sims D."/>
            <person name="Brettin T."/>
        </authorList>
    </citation>
    <scope>NUCLEOTIDE SEQUENCE [LARGE SCALE GENOMIC DNA]</scope>
    <source>
        <strain>A0248</strain>
    </source>
</reference>
<comment type="function">
    <text evidence="1">Catalyzes the conversion of 3-deoxy-D-arabino-heptulosonate 7-phosphate (DAHP) to dehydroquinate (DHQ).</text>
</comment>
<comment type="catalytic activity">
    <reaction evidence="1">
        <text>7-phospho-2-dehydro-3-deoxy-D-arabino-heptonate = 3-dehydroquinate + phosphate</text>
        <dbReference type="Rhea" id="RHEA:21968"/>
        <dbReference type="ChEBI" id="CHEBI:32364"/>
        <dbReference type="ChEBI" id="CHEBI:43474"/>
        <dbReference type="ChEBI" id="CHEBI:58394"/>
        <dbReference type="EC" id="4.2.3.4"/>
    </reaction>
</comment>
<comment type="cofactor">
    <cofactor evidence="1">
        <name>Co(2+)</name>
        <dbReference type="ChEBI" id="CHEBI:48828"/>
    </cofactor>
    <cofactor evidence="1">
        <name>Zn(2+)</name>
        <dbReference type="ChEBI" id="CHEBI:29105"/>
    </cofactor>
    <text evidence="1">Binds 1 divalent metal cation per subunit. Can use either Co(2+) or Zn(2+).</text>
</comment>
<comment type="cofactor">
    <cofactor evidence="1">
        <name>NAD(+)</name>
        <dbReference type="ChEBI" id="CHEBI:57540"/>
    </cofactor>
</comment>
<comment type="pathway">
    <text evidence="1">Metabolic intermediate biosynthesis; chorismate biosynthesis; chorismate from D-erythrose 4-phosphate and phosphoenolpyruvate: step 2/7.</text>
</comment>
<comment type="subcellular location">
    <subcellularLocation>
        <location evidence="1">Cytoplasm</location>
    </subcellularLocation>
</comment>
<comment type="similarity">
    <text evidence="1">Belongs to the sugar phosphate cyclases superfamily. Dehydroquinate synthase family.</text>
</comment>
<accession>C3P5A4</accession>